<sequence>MQSTRKTNQLAIPDLSGKVTIGDLLEAFSSYEKEIISIKLSKQRRSRDEDLKVGYVEFETVEDTEKAYGEGSVKVAGEAKALHYAKRKDQRMKERVIVSSKKVYISGIPEDTDKDELSALLGNCRISGGDKGKNYLFAEYDNSEEQERALSKINNMKIKGSKLFAMPAYEKANIGRIGRRKGDFN</sequence>
<gene>
    <name type="ordered locus">ECU09_1470</name>
</gene>
<name>Y9E7_ENCCU</name>
<reference key="1">
    <citation type="journal article" date="2001" name="Nature">
        <title>Genome sequence and gene compaction of the eukaryote parasite Encephalitozoon cuniculi.</title>
        <authorList>
            <person name="Katinka M.D."/>
            <person name="Duprat S."/>
            <person name="Cornillot E."/>
            <person name="Metenier G."/>
            <person name="Thomarat F."/>
            <person name="Prensier G."/>
            <person name="Barbe V."/>
            <person name="Peyretaillade E."/>
            <person name="Brottier P."/>
            <person name="Wincker P."/>
            <person name="Delbac F."/>
            <person name="El Alaoui H."/>
            <person name="Peyret P."/>
            <person name="Saurin W."/>
            <person name="Gouy M."/>
            <person name="Weissenbach J."/>
            <person name="Vivares C.P."/>
        </authorList>
    </citation>
    <scope>NUCLEOTIDE SEQUENCE [LARGE SCALE GENOMIC DNA]</scope>
    <source>
        <strain>GB-M1</strain>
    </source>
</reference>
<reference key="2">
    <citation type="journal article" date="2006" name="Proteomics">
        <title>Proteomic analysis of the eukaryotic parasite Encephalitozoon cuniculi (microsporidia): a reference map for proteins expressed in late sporogonial stages.</title>
        <authorList>
            <person name="Brosson D."/>
            <person name="Kuhn L."/>
            <person name="Delbac F."/>
            <person name="Garin J."/>
            <person name="Vivares C.P."/>
            <person name="Texier C."/>
        </authorList>
    </citation>
    <scope>IDENTIFICATION BY MASS SPECTROMETRY [LARGE SCALE ANALYSIS]</scope>
    <scope>DEVELOPMENTAL STAGE</scope>
    <scope>SUBCELLULAR LOCATION</scope>
</reference>
<comment type="developmental stage">
    <text evidence="2">Expressed in late sporogonial stages.</text>
</comment>
<protein>
    <recommendedName>
        <fullName>RRM domain-containing protein ECU09_1470</fullName>
    </recommendedName>
</protein>
<evidence type="ECO:0000255" key="1">
    <source>
        <dbReference type="PROSITE-ProRule" id="PRU00176"/>
    </source>
</evidence>
<evidence type="ECO:0000269" key="2">
    <source>
    </source>
</evidence>
<keyword id="KW-1185">Reference proteome</keyword>
<keyword id="KW-0677">Repeat</keyword>
<keyword id="KW-0694">RNA-binding</keyword>
<feature type="chain" id="PRO_0000383032" description="RRM domain-containing protein ECU09_1470">
    <location>
        <begin position="1"/>
        <end position="185"/>
    </location>
</feature>
<feature type="domain" description="RRM 1" evidence="1">
    <location>
        <begin position="8"/>
        <end position="87"/>
    </location>
</feature>
<feature type="domain" description="RRM 2" evidence="1">
    <location>
        <begin position="101"/>
        <end position="170"/>
    </location>
</feature>
<proteinExistence type="evidence at protein level"/>
<accession>Q8STN7</accession>
<dbReference type="EMBL" id="AL590451">
    <property type="protein sequence ID" value="CAD27119.2"/>
    <property type="molecule type" value="Genomic_DNA"/>
</dbReference>
<dbReference type="RefSeq" id="NP_001402400.1">
    <property type="nucleotide sequence ID" value="NM_001415460.1"/>
</dbReference>
<dbReference type="RefSeq" id="XP_955700.1">
    <property type="nucleotide sequence ID" value="XM_950607.1"/>
</dbReference>
<dbReference type="SMR" id="Q8STN7"/>
<dbReference type="STRING" id="284813.Q8STN7"/>
<dbReference type="GeneID" id="860486"/>
<dbReference type="VEuPathDB" id="MicrosporidiaDB:ECU09_1470"/>
<dbReference type="HOGENOM" id="CLU_125555_0_0_1"/>
<dbReference type="InParanoid" id="Q8STN7"/>
<dbReference type="OrthoDB" id="1099063at2759"/>
<dbReference type="Proteomes" id="UP000000819">
    <property type="component" value="Chromosome IX"/>
</dbReference>
<dbReference type="GO" id="GO:0003723">
    <property type="term" value="F:RNA binding"/>
    <property type="evidence" value="ECO:0007669"/>
    <property type="project" value="UniProtKB-KW"/>
</dbReference>
<dbReference type="CDD" id="cd00590">
    <property type="entry name" value="RRM_SF"/>
    <property type="match status" value="2"/>
</dbReference>
<dbReference type="Gene3D" id="3.30.70.330">
    <property type="match status" value="2"/>
</dbReference>
<dbReference type="InterPro" id="IPR012677">
    <property type="entry name" value="Nucleotide-bd_a/b_plait_sf"/>
</dbReference>
<dbReference type="InterPro" id="IPR035979">
    <property type="entry name" value="RBD_domain_sf"/>
</dbReference>
<dbReference type="InterPro" id="IPR000504">
    <property type="entry name" value="RRM_dom"/>
</dbReference>
<dbReference type="PANTHER" id="PTHR24012">
    <property type="entry name" value="RNA BINDING PROTEIN"/>
    <property type="match status" value="1"/>
</dbReference>
<dbReference type="Pfam" id="PF00076">
    <property type="entry name" value="RRM_1"/>
    <property type="match status" value="2"/>
</dbReference>
<dbReference type="SMART" id="SM00360">
    <property type="entry name" value="RRM"/>
    <property type="match status" value="1"/>
</dbReference>
<dbReference type="SUPFAM" id="SSF54928">
    <property type="entry name" value="RNA-binding domain, RBD"/>
    <property type="match status" value="1"/>
</dbReference>
<dbReference type="PROSITE" id="PS50102">
    <property type="entry name" value="RRM"/>
    <property type="match status" value="1"/>
</dbReference>
<organism>
    <name type="scientific">Encephalitozoon cuniculi (strain GB-M1)</name>
    <name type="common">Microsporidian parasite</name>
    <dbReference type="NCBI Taxonomy" id="284813"/>
    <lineage>
        <taxon>Eukaryota</taxon>
        <taxon>Fungi</taxon>
        <taxon>Fungi incertae sedis</taxon>
        <taxon>Microsporidia</taxon>
        <taxon>Unikaryonidae</taxon>
        <taxon>Encephalitozoon</taxon>
    </lineage>
</organism>